<comment type="function">
    <text evidence="1">Envelope phosphoglycoprotein which mediates the fusion of viral and host endosomal membranes leading to virus entry into the host cell.</text>
</comment>
<comment type="subcellular location">
    <subcellularLocation>
        <location evidence="3">Virion membrane</location>
        <topology evidence="3">Single-pass membrane protein</topology>
    </subcellularLocation>
    <subcellularLocation>
        <location evidence="3">Host cell membrane</location>
        <topology evidence="3">Single-pass membrane protein</topology>
    </subcellularLocation>
</comment>
<comment type="PTM">
    <text evidence="1">Palmitoylated.</text>
</comment>
<comment type="similarity">
    <text evidence="3">Belongs to the baculoviridae gp64 family.</text>
</comment>
<comment type="sequence caution" evidence="3">
    <conflict type="frameshift">
        <sequence resource="EMBL-CDS" id="CAA25117"/>
    </conflict>
</comment>
<proteinExistence type="inferred from homology"/>
<dbReference type="EMBL" id="X00410">
    <property type="protein sequence ID" value="CAA25117.1"/>
    <property type="status" value="ALT_FRAME"/>
    <property type="molecule type" value="Genomic_DNA"/>
</dbReference>
<dbReference type="PIR" id="S07237">
    <property type="entry name" value="S07237"/>
</dbReference>
<dbReference type="SMR" id="P04872"/>
<dbReference type="GlyCosmos" id="P04872">
    <property type="glycosylation" value="4 sites, No reported glycans"/>
</dbReference>
<dbReference type="GO" id="GO:0020002">
    <property type="term" value="C:host cell plasma membrane"/>
    <property type="evidence" value="ECO:0007669"/>
    <property type="project" value="UniProtKB-SubCell"/>
</dbReference>
<dbReference type="GO" id="GO:0016020">
    <property type="term" value="C:membrane"/>
    <property type="evidence" value="ECO:0007669"/>
    <property type="project" value="UniProtKB-KW"/>
</dbReference>
<dbReference type="GO" id="GO:0019031">
    <property type="term" value="C:viral envelope"/>
    <property type="evidence" value="ECO:0007669"/>
    <property type="project" value="UniProtKB-KW"/>
</dbReference>
<dbReference type="GO" id="GO:0055036">
    <property type="term" value="C:virion membrane"/>
    <property type="evidence" value="ECO:0007669"/>
    <property type="project" value="UniProtKB-SubCell"/>
</dbReference>
<dbReference type="GO" id="GO:0039654">
    <property type="term" value="P:fusion of virus membrane with host endosome membrane"/>
    <property type="evidence" value="ECO:0007669"/>
    <property type="project" value="UniProtKB-KW"/>
</dbReference>
<dbReference type="GO" id="GO:0046718">
    <property type="term" value="P:symbiont entry into host cell"/>
    <property type="evidence" value="ECO:0007669"/>
    <property type="project" value="UniProtKB-KW"/>
</dbReference>
<dbReference type="GO" id="GO:0044003">
    <property type="term" value="P:symbiont-mediated perturbation of host process"/>
    <property type="evidence" value="ECO:0007669"/>
    <property type="project" value="InterPro"/>
</dbReference>
<dbReference type="Gene3D" id="2.40.50.710">
    <property type="match status" value="1"/>
</dbReference>
<dbReference type="Gene3D" id="6.10.250.3010">
    <property type="match status" value="1"/>
</dbReference>
<dbReference type="Gene3D" id="6.20.460.10">
    <property type="match status" value="1"/>
</dbReference>
<dbReference type="InterPro" id="IPR004955">
    <property type="entry name" value="Baculovirus_Gp64"/>
</dbReference>
<dbReference type="Pfam" id="PF03273">
    <property type="entry name" value="Baculo_gp64"/>
    <property type="match status" value="1"/>
</dbReference>
<sequence>SNTRVEETMKTLNVGKEDLLMWSIRQQCEVGEELIDRWGSDSDDCFRDNEGRGQWVKGKELVKRQNNNHFAHHTCNKSWRCGISTSKMYSKLECQDDTDECQVYILDAEGNPINVTVDTVLHRDGVSMILKQKSTFTTRQIKAACLLIKDDKNNPESVTREHCLIDNDIYDLSKNTWNCKFNRCIKRKVEHRVKKRPPTWRHNVRAKYTEGDTATKGDLMHIQEELMYENDLLKMNIELMHAHINKLNNMLHDLIVSVAKVDERLIGNLMNNSVSSTFLSDDTFLLMPCTNPPAHTSNCYNNSIYKEGRWVANTDSSQCIDFSNYKELAIDDDVEIL</sequence>
<keyword id="KW-1170">Fusion of virus membrane with host endosomal membrane</keyword>
<keyword id="KW-1168">Fusion of virus membrane with host membrane</keyword>
<keyword id="KW-0325">Glycoprotein</keyword>
<keyword id="KW-1032">Host cell membrane</keyword>
<keyword id="KW-1043">Host membrane</keyword>
<keyword id="KW-0449">Lipoprotein</keyword>
<keyword id="KW-0472">Membrane</keyword>
<keyword id="KW-0564">Palmitate</keyword>
<keyword id="KW-0597">Phosphoprotein</keyword>
<keyword id="KW-0812">Transmembrane</keyword>
<keyword id="KW-0261">Viral envelope protein</keyword>
<keyword id="KW-1162">Viral penetration into host cytoplasm</keyword>
<keyword id="KW-0946">Virion</keyword>
<keyword id="KW-1160">Virus entry into host cell</keyword>
<reference key="1">
    <citation type="journal article" date="1984" name="FEBS Lett.">
        <title>Nucleotide sequence of the Galleria mellonella nuclear polyhedrosis virus origin of DNA replication.</title>
        <authorList>
            <person name="Blinov V.M."/>
            <person name="Gutorov V.V."/>
            <person name="Holodilov N.G."/>
            <person name="Iljichev A.A."/>
            <person name="Karginov V.A."/>
            <person name="Mikrjukov N.N."/>
            <person name="Mordvinov V.A."/>
            <person name="Nikonov I.V."/>
            <person name="Petrov N.A."/>
            <person name="Urmanov I.H."/>
            <person name="Vasilenko S.K."/>
        </authorList>
    </citation>
    <scope>NUCLEOTIDE SEQUENCE [GENOMIC DNA]</scope>
</reference>
<gene>
    <name type="primary">GP67</name>
    <name type="synonym">P67</name>
</gene>
<organismHost>
    <name type="scientific">Lepidoptera</name>
    <name type="common">butterflies and moths</name>
    <dbReference type="NCBI Taxonomy" id="7088"/>
</organismHost>
<accession>P04872</accession>
<evidence type="ECO:0000250" key="1"/>
<evidence type="ECO:0000255" key="2"/>
<evidence type="ECO:0000305" key="3"/>
<feature type="chain" id="PRO_0000132915" description="Major envelope glycoprotein">
    <location>
        <begin position="1" status="less than"/>
        <end position="337" status="greater than"/>
    </location>
</feature>
<feature type="glycosylation site" description="N-linked (GlcNAc...) asparagine; by host" evidence="2">
    <location>
        <position position="76"/>
    </location>
</feature>
<feature type="glycosylation site" description="N-linked (GlcNAc...) asparagine; by host" evidence="2">
    <location>
        <position position="114"/>
    </location>
</feature>
<feature type="glycosylation site" description="N-linked (GlcNAc...) asparagine; by host" evidence="2">
    <location>
        <position position="271"/>
    </location>
</feature>
<feature type="glycosylation site" description="N-linked (GlcNAc...) asparagine; by host" evidence="2">
    <location>
        <position position="301"/>
    </location>
</feature>
<feature type="non-terminal residue">
    <location>
        <position position="1"/>
    </location>
</feature>
<feature type="non-terminal residue">
    <location>
        <position position="337"/>
    </location>
</feature>
<name>FUS_NPVGM</name>
<protein>
    <recommendedName>
        <fullName>Major envelope glycoprotein</fullName>
    </recommendedName>
    <alternativeName>
        <fullName>gp67</fullName>
    </alternativeName>
</protein>
<organism>
    <name type="scientific">Galleria mellonella nuclear polyhedrosis virus</name>
    <name type="common">GmNPV</name>
    <dbReference type="NCBI Taxonomy" id="307468"/>
    <lineage>
        <taxon>Viruses</taxon>
        <taxon>Viruses incertae sedis</taxon>
        <taxon>Naldaviricetes</taxon>
        <taxon>Lefavirales</taxon>
        <taxon>Baculoviridae</taxon>
        <taxon>Alphabaculovirus</taxon>
        <taxon>Alphabaculovirus aucalifornicae</taxon>
    </lineage>
</organism>